<proteinExistence type="inferred from homology"/>
<feature type="chain" id="PRO_0000278304" description="Medium/long-chain-fatty-acid--[acyl-carrier-protein] ligase MbtM">
    <location>
        <begin position="1"/>
        <end position="521"/>
    </location>
</feature>
<feature type="region of interest" description="Disordered" evidence="2">
    <location>
        <begin position="146"/>
        <end position="172"/>
    </location>
</feature>
<name>MBTM_MYCPA</name>
<dbReference type="EC" id="6.2.1.20" evidence="1"/>
<dbReference type="EC" id="6.2.1.47" evidence="1"/>
<dbReference type="EMBL" id="AE016958">
    <property type="protein sequence ID" value="AAS03871.1"/>
    <property type="molecule type" value="Genomic_DNA"/>
</dbReference>
<dbReference type="RefSeq" id="WP_003877914.1">
    <property type="nucleotide sequence ID" value="NZ_CP106873.1"/>
</dbReference>
<dbReference type="SMR" id="Q73ZP7"/>
<dbReference type="STRING" id="262316.MAP_1554c"/>
<dbReference type="KEGG" id="mpa:MAP_1554c"/>
<dbReference type="PATRIC" id="fig|262316.17.peg.1646"/>
<dbReference type="eggNOG" id="COG0318">
    <property type="taxonomic scope" value="Bacteria"/>
</dbReference>
<dbReference type="HOGENOM" id="CLU_000022_23_7_11"/>
<dbReference type="UniPathway" id="UPA00011"/>
<dbReference type="Proteomes" id="UP000000580">
    <property type="component" value="Chromosome"/>
</dbReference>
<dbReference type="GO" id="GO:0005886">
    <property type="term" value="C:plasma membrane"/>
    <property type="evidence" value="ECO:0007669"/>
    <property type="project" value="TreeGrafter"/>
</dbReference>
<dbReference type="GO" id="GO:0070566">
    <property type="term" value="F:adenylyltransferase activity"/>
    <property type="evidence" value="ECO:0007669"/>
    <property type="project" value="TreeGrafter"/>
</dbReference>
<dbReference type="GO" id="GO:0005524">
    <property type="term" value="F:ATP binding"/>
    <property type="evidence" value="ECO:0007669"/>
    <property type="project" value="UniProtKB-KW"/>
</dbReference>
<dbReference type="GO" id="GO:0008922">
    <property type="term" value="F:long-chain fatty acid [acyl-carrier-protein] ligase activity"/>
    <property type="evidence" value="ECO:0007669"/>
    <property type="project" value="UniProtKB-EC"/>
</dbReference>
<dbReference type="GO" id="GO:0006633">
    <property type="term" value="P:fatty acid biosynthetic process"/>
    <property type="evidence" value="ECO:0007669"/>
    <property type="project" value="TreeGrafter"/>
</dbReference>
<dbReference type="Gene3D" id="3.30.300.30">
    <property type="match status" value="1"/>
</dbReference>
<dbReference type="Gene3D" id="3.40.50.12780">
    <property type="entry name" value="N-terminal domain of ligase-like"/>
    <property type="match status" value="1"/>
</dbReference>
<dbReference type="InterPro" id="IPR045851">
    <property type="entry name" value="AMP-bd_C_sf"/>
</dbReference>
<dbReference type="InterPro" id="IPR020845">
    <property type="entry name" value="AMP-binding_CS"/>
</dbReference>
<dbReference type="InterPro" id="IPR000873">
    <property type="entry name" value="AMP-dep_synth/lig_dom"/>
</dbReference>
<dbReference type="InterPro" id="IPR042099">
    <property type="entry name" value="ANL_N_sf"/>
</dbReference>
<dbReference type="NCBIfam" id="NF004510">
    <property type="entry name" value="PRK05851.1"/>
    <property type="match status" value="1"/>
</dbReference>
<dbReference type="PANTHER" id="PTHR22754:SF32">
    <property type="entry name" value="DISCO-INTERACTING PROTEIN 2"/>
    <property type="match status" value="1"/>
</dbReference>
<dbReference type="PANTHER" id="PTHR22754">
    <property type="entry name" value="DISCO-INTERACTING PROTEIN 2 DIP2 -RELATED"/>
    <property type="match status" value="1"/>
</dbReference>
<dbReference type="Pfam" id="PF00501">
    <property type="entry name" value="AMP-binding"/>
    <property type="match status" value="1"/>
</dbReference>
<dbReference type="SUPFAM" id="SSF56801">
    <property type="entry name" value="Acetyl-CoA synthetase-like"/>
    <property type="match status" value="1"/>
</dbReference>
<dbReference type="PROSITE" id="PS00455">
    <property type="entry name" value="AMP_BINDING"/>
    <property type="match status" value="1"/>
</dbReference>
<protein>
    <recommendedName>
        <fullName evidence="1">Medium/long-chain-fatty-acid--[acyl-carrier-protein] ligase MbtM</fullName>
        <ecNumber evidence="1">6.2.1.20</ecNumber>
        <ecNumber evidence="1">6.2.1.47</ecNumber>
    </recommendedName>
    <alternativeName>
        <fullName evidence="1">Fatty acyl-[acyl-carrier-protein] synthetase</fullName>
        <shortName evidence="1">Fatty acyl-ACP synthetase</shortName>
    </alternativeName>
    <alternativeName>
        <fullName evidence="1">Mycobactin synthetase protein M</fullName>
    </alternativeName>
</protein>
<keyword id="KW-0067">ATP-binding</keyword>
<keyword id="KW-0436">Ligase</keyword>
<keyword id="KW-0547">Nucleotide-binding</keyword>
<keyword id="KW-1185">Reference proteome</keyword>
<evidence type="ECO:0000250" key="1">
    <source>
        <dbReference type="UniProtKB" id="A0QUA1"/>
    </source>
</evidence>
<evidence type="ECO:0000256" key="2">
    <source>
        <dbReference type="SAM" id="MobiDB-lite"/>
    </source>
</evidence>
<evidence type="ECO:0000305" key="3"/>
<comment type="function">
    <text evidence="1">Activates lipidic moieties required for mycobactin biosynthesis. Converts medium- to long-chain aliphatic fatty acids into acyl adenylate, which is further transferred on to the phosphopantetheine arm of the carrier protein MbtL.</text>
</comment>
<comment type="catalytic activity">
    <reaction evidence="1">
        <text>a long-chain fatty acid + holo-[ACP] + ATP = a long-chain fatty acyl-[ACP] + AMP + diphosphate</text>
        <dbReference type="Rhea" id="RHEA:45588"/>
        <dbReference type="Rhea" id="RHEA-COMP:9685"/>
        <dbReference type="Rhea" id="RHEA-COMP:12682"/>
        <dbReference type="ChEBI" id="CHEBI:30616"/>
        <dbReference type="ChEBI" id="CHEBI:33019"/>
        <dbReference type="ChEBI" id="CHEBI:57560"/>
        <dbReference type="ChEBI" id="CHEBI:64479"/>
        <dbReference type="ChEBI" id="CHEBI:133243"/>
        <dbReference type="ChEBI" id="CHEBI:456215"/>
        <dbReference type="EC" id="6.2.1.20"/>
    </reaction>
</comment>
<comment type="catalytic activity">
    <reaction evidence="1">
        <text>a medium-chain fatty acid + holo-[ACP] + ATP = a medium-chain fatty acyl-[ACP] + AMP + diphosphate</text>
        <dbReference type="Rhea" id="RHEA:50460"/>
        <dbReference type="Rhea" id="RHEA-COMP:9685"/>
        <dbReference type="Rhea" id="RHEA-COMP:12681"/>
        <dbReference type="ChEBI" id="CHEBI:30616"/>
        <dbReference type="ChEBI" id="CHEBI:33019"/>
        <dbReference type="ChEBI" id="CHEBI:59558"/>
        <dbReference type="ChEBI" id="CHEBI:64479"/>
        <dbReference type="ChEBI" id="CHEBI:133242"/>
        <dbReference type="ChEBI" id="CHEBI:456215"/>
        <dbReference type="EC" id="6.2.1.47"/>
    </reaction>
</comment>
<comment type="pathway">
    <text evidence="1">Siderophore biosynthesis; mycobactin biosynthesis.</text>
</comment>
<comment type="similarity">
    <text evidence="3">Belongs to the ATP-dependent AMP-binding enzyme family.</text>
</comment>
<accession>Q73ZP7</accession>
<reference key="1">
    <citation type="journal article" date="2005" name="Proc. Natl. Acad. Sci. U.S.A.">
        <title>The complete genome sequence of Mycobacterium avium subspecies paratuberculosis.</title>
        <authorList>
            <person name="Li L."/>
            <person name="Bannantine J.P."/>
            <person name="Zhang Q."/>
            <person name="Amonsin A."/>
            <person name="May B.J."/>
            <person name="Alt D."/>
            <person name="Banerji N."/>
            <person name="Kanjilal S."/>
            <person name="Kapur V."/>
        </authorList>
    </citation>
    <scope>NUCLEOTIDE SEQUENCE [LARGE SCALE GENOMIC DNA]</scope>
    <source>
        <strain>ATCC BAA-968 / K-10</strain>
    </source>
</reference>
<organism>
    <name type="scientific">Mycolicibacterium paratuberculosis (strain ATCC BAA-968 / K-10)</name>
    <name type="common">Mycobacterium paratuberculosis</name>
    <dbReference type="NCBI Taxonomy" id="262316"/>
    <lineage>
        <taxon>Bacteria</taxon>
        <taxon>Bacillati</taxon>
        <taxon>Actinomycetota</taxon>
        <taxon>Actinomycetes</taxon>
        <taxon>Mycobacteriales</taxon>
        <taxon>Mycobacteriaceae</taxon>
        <taxon>Mycobacterium</taxon>
        <taxon>Mycobacterium avium complex (MAC)</taxon>
    </lineage>
</organism>
<gene>
    <name type="primary">mbtM</name>
    <name type="synonym">fadD33</name>
    <name type="ordered locus">MAP_1554c</name>
</gene>
<sequence>MSELAAALTAAMRTGGSDLVVFDRESAAWRRHRWPEVHGLAEGIAAWLLDRDRPAALGLVGEPTLEFVAAIVGAWLAGAGVSILPGPVRGAEGRRWADTTLTRFAGIGVRTVLSHGSHLDALQALDPSRPDEMVVEDLAVAANTGRRCPEPPAPHANPAILQGTAGSTGTPKTAALSPDAVLANLRGLNARLGVTPADVGCSWLPLYHDMGLSFLLASALGGMSLWLAPTSAFTASPFRWLAWLSESRATITAAPNFAYNLVGKYARRVSGVDLGALRVAINGGEPVDCAGFERFTTAMAPFGFDAGAATPSYGLAEATCAVSVPAPGTGLRFADVSDETGTRRHAVLGAPIPGTEIRISPRHDAPDGIGEIEIRGASMMDGYLGHAPIDHQNWFPTGDLGFFSDDGLVVCGRAKELITLAGRNIFPTEIETVAAQVPGVREGAVVALGTGENSARPGLIIAAEFAGRDRAGARAEVIQRVASVCGVVPSDVIFMAPGSLPRTSSGKLRRLDVRRSLEAVD</sequence>